<sequence length="506" mass="53841">MNTMTLTPGQLSLSQLYDIWRHPVQLRLDASAIDGINASVACVNDIVAEGRTAYGINTGFGLLAQTRIADEDLQNLQRSLVLSHAAGVGDPLDDAMVRLIMVLKINSLARGFSGIRLSVIEALIALVNAGVYPLIPAKGSVGASGDLAPLAHLSLTLLGEGKARWQGEWLPAQTALKKAGLEPVALAAKEGLALLNGTQASTAFALRGLFEAQELFASAVVCGALTTEAVLGSRRPFDARIHAARGQQGQIDVARLFRHLLTDTSAIAESHHHCHKVQDPYSLRCQPQVMGACLTQLRQTKEVLLAEANAVSDNPLVFADAGEVISGGNFHAEPVAMAADNLALAIAEIGALSERRIALMMDKHMSQLPPFLVKNGGVNSGFMIAQVTAAALASENKALAHPHSVDSLPTSANQEDHVSMAPAAGRRLWEMAANTRGIIAVEWLAACQGIDLREGLTSSPLLEQARQTLREQVAHYTQDRFFAPDIECATALLAQGALQRLVPDFM</sequence>
<organism>
    <name type="scientific">Salmonella typhimurium (strain LT2 / SGSC1412 / ATCC 700720)</name>
    <dbReference type="NCBI Taxonomy" id="99287"/>
    <lineage>
        <taxon>Bacteria</taxon>
        <taxon>Pseudomonadati</taxon>
        <taxon>Pseudomonadota</taxon>
        <taxon>Gammaproteobacteria</taxon>
        <taxon>Enterobacterales</taxon>
        <taxon>Enterobacteriaceae</taxon>
        <taxon>Salmonella</taxon>
    </lineage>
</organism>
<gene>
    <name evidence="1" type="primary">hutH</name>
    <name type="ordered locus">STM0791</name>
</gene>
<keyword id="KW-0963">Cytoplasm</keyword>
<keyword id="KW-0369">Histidine metabolism</keyword>
<keyword id="KW-0456">Lyase</keyword>
<keyword id="KW-1185">Reference proteome</keyword>
<feature type="chain" id="PRO_0000161026" description="Histidine ammonia-lyase">
    <location>
        <begin position="1"/>
        <end position="506"/>
    </location>
</feature>
<feature type="modified residue" description="2,3-didehydroalanine (Ser)" evidence="1">
    <location>
        <position position="144"/>
    </location>
</feature>
<feature type="cross-link" description="5-imidazolinone (Ala-Gly)" evidence="1">
    <location>
        <begin position="143"/>
        <end position="145"/>
    </location>
</feature>
<evidence type="ECO:0000255" key="1">
    <source>
        <dbReference type="HAMAP-Rule" id="MF_00229"/>
    </source>
</evidence>
<dbReference type="EC" id="4.3.1.3" evidence="1"/>
<dbReference type="EMBL" id="AE006468">
    <property type="protein sequence ID" value="AAL19728.1"/>
    <property type="molecule type" value="Genomic_DNA"/>
</dbReference>
<dbReference type="RefSeq" id="NP_459769.1">
    <property type="nucleotide sequence ID" value="NC_003197.2"/>
</dbReference>
<dbReference type="RefSeq" id="WP_001095227.1">
    <property type="nucleotide sequence ID" value="NC_003197.2"/>
</dbReference>
<dbReference type="SMR" id="Q8ZQQ9"/>
<dbReference type="STRING" id="99287.STM0791"/>
<dbReference type="PaxDb" id="99287-STM0791"/>
<dbReference type="GeneID" id="1252311"/>
<dbReference type="KEGG" id="stm:STM0791"/>
<dbReference type="PATRIC" id="fig|99287.12.peg.825"/>
<dbReference type="HOGENOM" id="CLU_014801_4_0_6"/>
<dbReference type="OMA" id="YSLRCMP"/>
<dbReference type="PhylomeDB" id="Q8ZQQ9"/>
<dbReference type="BioCyc" id="SENT99287:STM0791-MONOMER"/>
<dbReference type="UniPathway" id="UPA00379">
    <property type="reaction ID" value="UER00549"/>
</dbReference>
<dbReference type="Proteomes" id="UP000001014">
    <property type="component" value="Chromosome"/>
</dbReference>
<dbReference type="GO" id="GO:0005737">
    <property type="term" value="C:cytoplasm"/>
    <property type="evidence" value="ECO:0007669"/>
    <property type="project" value="UniProtKB-SubCell"/>
</dbReference>
<dbReference type="GO" id="GO:0004397">
    <property type="term" value="F:histidine ammonia-lyase activity"/>
    <property type="evidence" value="ECO:0000318"/>
    <property type="project" value="GO_Central"/>
</dbReference>
<dbReference type="GO" id="GO:0006548">
    <property type="term" value="P:L-histidine catabolic process"/>
    <property type="evidence" value="ECO:0000318"/>
    <property type="project" value="GO_Central"/>
</dbReference>
<dbReference type="GO" id="GO:0019556">
    <property type="term" value="P:L-histidine catabolic process to glutamate and formamide"/>
    <property type="evidence" value="ECO:0007669"/>
    <property type="project" value="UniProtKB-UniPathway"/>
</dbReference>
<dbReference type="GO" id="GO:0019557">
    <property type="term" value="P:L-histidine catabolic process to glutamate and formate"/>
    <property type="evidence" value="ECO:0007669"/>
    <property type="project" value="UniProtKB-UniPathway"/>
</dbReference>
<dbReference type="CDD" id="cd00332">
    <property type="entry name" value="PAL-HAL"/>
    <property type="match status" value="1"/>
</dbReference>
<dbReference type="FunFam" id="1.10.275.10:FF:000005">
    <property type="entry name" value="Histidine ammonia-lyase"/>
    <property type="match status" value="1"/>
</dbReference>
<dbReference type="FunFam" id="1.20.200.10:FF:000003">
    <property type="entry name" value="Histidine ammonia-lyase"/>
    <property type="match status" value="1"/>
</dbReference>
<dbReference type="Gene3D" id="1.20.200.10">
    <property type="entry name" value="Fumarase/aspartase (Central domain)"/>
    <property type="match status" value="1"/>
</dbReference>
<dbReference type="Gene3D" id="1.10.275.10">
    <property type="entry name" value="Fumarase/aspartase (N-terminal domain)"/>
    <property type="match status" value="1"/>
</dbReference>
<dbReference type="HAMAP" id="MF_00229">
    <property type="entry name" value="His_ammonia_lyase"/>
    <property type="match status" value="1"/>
</dbReference>
<dbReference type="InterPro" id="IPR001106">
    <property type="entry name" value="Aromatic_Lyase"/>
</dbReference>
<dbReference type="InterPro" id="IPR024083">
    <property type="entry name" value="Fumarase/histidase_N"/>
</dbReference>
<dbReference type="InterPro" id="IPR005921">
    <property type="entry name" value="HutH"/>
</dbReference>
<dbReference type="InterPro" id="IPR008948">
    <property type="entry name" value="L-Aspartase-like"/>
</dbReference>
<dbReference type="InterPro" id="IPR022313">
    <property type="entry name" value="Phe/His_NH3-lyase_AS"/>
</dbReference>
<dbReference type="NCBIfam" id="TIGR01225">
    <property type="entry name" value="hutH"/>
    <property type="match status" value="1"/>
</dbReference>
<dbReference type="NCBIfam" id="NF006871">
    <property type="entry name" value="PRK09367.1"/>
    <property type="match status" value="1"/>
</dbReference>
<dbReference type="PANTHER" id="PTHR10362">
    <property type="entry name" value="HISTIDINE AMMONIA-LYASE"/>
    <property type="match status" value="1"/>
</dbReference>
<dbReference type="Pfam" id="PF00221">
    <property type="entry name" value="Lyase_aromatic"/>
    <property type="match status" value="1"/>
</dbReference>
<dbReference type="SUPFAM" id="SSF48557">
    <property type="entry name" value="L-aspartase-like"/>
    <property type="match status" value="1"/>
</dbReference>
<dbReference type="PROSITE" id="PS00488">
    <property type="entry name" value="PAL_HISTIDASE"/>
    <property type="match status" value="1"/>
</dbReference>
<protein>
    <recommendedName>
        <fullName evidence="1">Histidine ammonia-lyase</fullName>
        <shortName evidence="1">Histidase</shortName>
        <ecNumber evidence="1">4.3.1.3</ecNumber>
    </recommendedName>
</protein>
<accession>Q8ZQQ9</accession>
<name>HUTH_SALTY</name>
<proteinExistence type="inferred from homology"/>
<reference key="1">
    <citation type="journal article" date="2001" name="Nature">
        <title>Complete genome sequence of Salmonella enterica serovar Typhimurium LT2.</title>
        <authorList>
            <person name="McClelland M."/>
            <person name="Sanderson K.E."/>
            <person name="Spieth J."/>
            <person name="Clifton S.W."/>
            <person name="Latreille P."/>
            <person name="Courtney L."/>
            <person name="Porwollik S."/>
            <person name="Ali J."/>
            <person name="Dante M."/>
            <person name="Du F."/>
            <person name="Hou S."/>
            <person name="Layman D."/>
            <person name="Leonard S."/>
            <person name="Nguyen C."/>
            <person name="Scott K."/>
            <person name="Holmes A."/>
            <person name="Grewal N."/>
            <person name="Mulvaney E."/>
            <person name="Ryan E."/>
            <person name="Sun H."/>
            <person name="Florea L."/>
            <person name="Miller W."/>
            <person name="Stoneking T."/>
            <person name="Nhan M."/>
            <person name="Waterston R."/>
            <person name="Wilson R.K."/>
        </authorList>
    </citation>
    <scope>NUCLEOTIDE SEQUENCE [LARGE SCALE GENOMIC DNA]</scope>
    <source>
        <strain>LT2 / SGSC1412 / ATCC 700720</strain>
    </source>
</reference>
<comment type="catalytic activity">
    <reaction evidence="1">
        <text>L-histidine = trans-urocanate + NH4(+)</text>
        <dbReference type="Rhea" id="RHEA:21232"/>
        <dbReference type="ChEBI" id="CHEBI:17771"/>
        <dbReference type="ChEBI" id="CHEBI:28938"/>
        <dbReference type="ChEBI" id="CHEBI:57595"/>
        <dbReference type="EC" id="4.3.1.3"/>
    </reaction>
</comment>
<comment type="pathway">
    <text evidence="1">Amino-acid degradation; L-histidine degradation into L-glutamate; N-formimidoyl-L-glutamate from L-histidine: step 1/3.</text>
</comment>
<comment type="subcellular location">
    <subcellularLocation>
        <location evidence="1">Cytoplasm</location>
    </subcellularLocation>
</comment>
<comment type="PTM">
    <text evidence="1">Contains an active site 4-methylidene-imidazol-5-one (MIO), which is formed autocatalytically by cyclization and dehydration of residues Ala-Ser-Gly.</text>
</comment>
<comment type="similarity">
    <text evidence="1">Belongs to the PAL/histidase family.</text>
</comment>